<comment type="function">
    <text evidence="1">Catalyzes the reversible conversion of ribose-5-phosphate to ribulose 5-phosphate.</text>
</comment>
<comment type="catalytic activity">
    <reaction evidence="1">
        <text>aldehydo-D-ribose 5-phosphate = D-ribulose 5-phosphate</text>
        <dbReference type="Rhea" id="RHEA:14657"/>
        <dbReference type="ChEBI" id="CHEBI:58121"/>
        <dbReference type="ChEBI" id="CHEBI:58273"/>
        <dbReference type="EC" id="5.3.1.6"/>
    </reaction>
</comment>
<comment type="pathway">
    <text evidence="1">Carbohydrate degradation; pentose phosphate pathway; D-ribose 5-phosphate from D-ribulose 5-phosphate (non-oxidative stage): step 1/1.</text>
</comment>
<comment type="subunit">
    <text evidence="1">Homodimer.</text>
</comment>
<comment type="similarity">
    <text evidence="1">Belongs to the ribose 5-phosphate isomerase family.</text>
</comment>
<sequence length="236" mass="24701">MSKEELKRAAAARALEYVSDGMQLGLGTGSTAKHFVELLGERVRAGLRVVGVPTSEGTRADAERCGVPLTTLDDVDHLDLTVDGADEIAPSLDVIKGGGGALLREKIVAAASTRMVVISDDSKWVETLGRFPLPVEVIPFGLGATRRALATAFAEAGVTGEITLRQGPDGHAFVTDGGHWILDAHLGRIPEPPRLAALLSAIPGVVEHGLFIGLAKTAILAGSQGIRIVDRPRGRV</sequence>
<evidence type="ECO:0000255" key="1">
    <source>
        <dbReference type="HAMAP-Rule" id="MF_00170"/>
    </source>
</evidence>
<keyword id="KW-0413">Isomerase</keyword>
<keyword id="KW-1185">Reference proteome</keyword>
<feature type="chain" id="PRO_1000097679" description="Ribose-5-phosphate isomerase A">
    <location>
        <begin position="1"/>
        <end position="236"/>
    </location>
</feature>
<feature type="active site" description="Proton acceptor" evidence="1">
    <location>
        <position position="105"/>
    </location>
</feature>
<feature type="binding site" evidence="1">
    <location>
        <begin position="28"/>
        <end position="31"/>
    </location>
    <ligand>
        <name>substrate</name>
    </ligand>
</feature>
<feature type="binding site" evidence="1">
    <location>
        <begin position="83"/>
        <end position="86"/>
    </location>
    <ligand>
        <name>substrate</name>
    </ligand>
</feature>
<feature type="binding site" evidence="1">
    <location>
        <begin position="96"/>
        <end position="99"/>
    </location>
    <ligand>
        <name>substrate</name>
    </ligand>
</feature>
<feature type="binding site" evidence="1">
    <location>
        <position position="123"/>
    </location>
    <ligand>
        <name>substrate</name>
    </ligand>
</feature>
<name>RPIA_AFIC5</name>
<protein>
    <recommendedName>
        <fullName evidence="1">Ribose-5-phosphate isomerase A</fullName>
        <ecNumber evidence="1">5.3.1.6</ecNumber>
    </recommendedName>
    <alternativeName>
        <fullName evidence="1">Phosphoriboisomerase A</fullName>
        <shortName evidence="1">PRI</shortName>
    </alternativeName>
</protein>
<proteinExistence type="inferred from homology"/>
<reference key="1">
    <citation type="journal article" date="2008" name="J. Bacteriol.">
        <title>Genome sequence of the chemolithoautotrophic bacterium Oligotropha carboxidovorans OM5T.</title>
        <authorList>
            <person name="Paul D."/>
            <person name="Bridges S."/>
            <person name="Burgess S.C."/>
            <person name="Dandass Y."/>
            <person name="Lawrence M.L."/>
        </authorList>
    </citation>
    <scope>NUCLEOTIDE SEQUENCE [LARGE SCALE GENOMIC DNA]</scope>
    <source>
        <strain>ATCC 49405 / DSM 1227 / KCTC 32145 / OM5</strain>
    </source>
</reference>
<reference key="2">
    <citation type="journal article" date="2011" name="J. Bacteriol.">
        <title>Complete genome sequences of the chemolithoautotrophic Oligotropha carboxidovorans strains OM4 and OM5.</title>
        <authorList>
            <person name="Volland S."/>
            <person name="Rachinger M."/>
            <person name="Strittmatter A."/>
            <person name="Daniel R."/>
            <person name="Gottschalk G."/>
            <person name="Meyer O."/>
        </authorList>
    </citation>
    <scope>NUCLEOTIDE SEQUENCE [LARGE SCALE GENOMIC DNA]</scope>
    <source>
        <strain>ATCC 49405 / DSM 1227 / KCTC 32145 / OM5</strain>
    </source>
</reference>
<dbReference type="EC" id="5.3.1.6" evidence="1"/>
<dbReference type="EMBL" id="CP001196">
    <property type="protein sequence ID" value="ACI93641.1"/>
    <property type="molecule type" value="Genomic_DNA"/>
</dbReference>
<dbReference type="EMBL" id="CP002826">
    <property type="protein sequence ID" value="AEI06247.1"/>
    <property type="molecule type" value="Genomic_DNA"/>
</dbReference>
<dbReference type="RefSeq" id="WP_012563667.1">
    <property type="nucleotide sequence ID" value="NC_015684.1"/>
</dbReference>
<dbReference type="SMR" id="B6JE08"/>
<dbReference type="STRING" id="504832.OCA5_c15310"/>
<dbReference type="KEGG" id="oca:OCAR_6529"/>
<dbReference type="KEGG" id="ocg:OCA5_c15310"/>
<dbReference type="PATRIC" id="fig|504832.7.peg.1629"/>
<dbReference type="eggNOG" id="COG0120">
    <property type="taxonomic scope" value="Bacteria"/>
</dbReference>
<dbReference type="HOGENOM" id="CLU_056590_1_0_5"/>
<dbReference type="OrthoDB" id="5870696at2"/>
<dbReference type="UniPathway" id="UPA00115">
    <property type="reaction ID" value="UER00412"/>
</dbReference>
<dbReference type="Proteomes" id="UP000007730">
    <property type="component" value="Chromosome"/>
</dbReference>
<dbReference type="GO" id="GO:0004751">
    <property type="term" value="F:ribose-5-phosphate isomerase activity"/>
    <property type="evidence" value="ECO:0007669"/>
    <property type="project" value="UniProtKB-UniRule"/>
</dbReference>
<dbReference type="GO" id="GO:0009052">
    <property type="term" value="P:pentose-phosphate shunt, non-oxidative branch"/>
    <property type="evidence" value="ECO:0007669"/>
    <property type="project" value="UniProtKB-UniRule"/>
</dbReference>
<dbReference type="CDD" id="cd01398">
    <property type="entry name" value="RPI_A"/>
    <property type="match status" value="1"/>
</dbReference>
<dbReference type="FunFam" id="3.40.50.1360:FF:000001">
    <property type="entry name" value="Ribose-5-phosphate isomerase A"/>
    <property type="match status" value="1"/>
</dbReference>
<dbReference type="Gene3D" id="3.30.70.260">
    <property type="match status" value="1"/>
</dbReference>
<dbReference type="Gene3D" id="3.40.50.1360">
    <property type="match status" value="1"/>
</dbReference>
<dbReference type="HAMAP" id="MF_00170">
    <property type="entry name" value="Rib_5P_isom_A"/>
    <property type="match status" value="1"/>
</dbReference>
<dbReference type="InterPro" id="IPR037171">
    <property type="entry name" value="NagB/RpiA_transferase-like"/>
</dbReference>
<dbReference type="InterPro" id="IPR050262">
    <property type="entry name" value="Ribose-5P_isomerase"/>
</dbReference>
<dbReference type="InterPro" id="IPR020672">
    <property type="entry name" value="Ribose5P_isomerase_typA_subgr"/>
</dbReference>
<dbReference type="InterPro" id="IPR004788">
    <property type="entry name" value="Ribose5P_isomerase_type_A"/>
</dbReference>
<dbReference type="NCBIfam" id="NF001924">
    <property type="entry name" value="PRK00702.1"/>
    <property type="match status" value="1"/>
</dbReference>
<dbReference type="NCBIfam" id="TIGR00021">
    <property type="entry name" value="rpiA"/>
    <property type="match status" value="1"/>
</dbReference>
<dbReference type="PANTHER" id="PTHR43748">
    <property type="entry name" value="RIBOSE-5-PHOSPHATE ISOMERASE 3, CHLOROPLASTIC-RELATED"/>
    <property type="match status" value="1"/>
</dbReference>
<dbReference type="PANTHER" id="PTHR43748:SF3">
    <property type="entry name" value="RIBOSE-5-PHOSPHATE ISOMERASE 3, CHLOROPLASTIC-RELATED"/>
    <property type="match status" value="1"/>
</dbReference>
<dbReference type="Pfam" id="PF06026">
    <property type="entry name" value="Rib_5-P_isom_A"/>
    <property type="match status" value="1"/>
</dbReference>
<dbReference type="SUPFAM" id="SSF75445">
    <property type="entry name" value="D-ribose-5-phosphate isomerase (RpiA), lid domain"/>
    <property type="match status" value="1"/>
</dbReference>
<dbReference type="SUPFAM" id="SSF100950">
    <property type="entry name" value="NagB/RpiA/CoA transferase-like"/>
    <property type="match status" value="1"/>
</dbReference>
<gene>
    <name evidence="1" type="primary">rpiA</name>
    <name type="ordered locus">OCAR_6529</name>
    <name type="ordered locus">OCA5_c15310</name>
</gene>
<accession>B6JE08</accession>
<accession>F8BYQ2</accession>
<organism>
    <name type="scientific">Afipia carboxidovorans (strain ATCC 49405 / DSM 1227 / KCTC 32145 / OM5)</name>
    <name type="common">Oligotropha carboxidovorans</name>
    <dbReference type="NCBI Taxonomy" id="504832"/>
    <lineage>
        <taxon>Bacteria</taxon>
        <taxon>Pseudomonadati</taxon>
        <taxon>Pseudomonadota</taxon>
        <taxon>Alphaproteobacteria</taxon>
        <taxon>Hyphomicrobiales</taxon>
        <taxon>Nitrobacteraceae</taxon>
        <taxon>Afipia</taxon>
    </lineage>
</organism>